<gene>
    <name evidence="4" type="primary">arnR</name>
    <name evidence="7" type="ordered locus">Saci_1180</name>
</gene>
<organism>
    <name type="scientific">Sulfolobus acidocaldarius (strain ATCC 33909 / DSM 639 / JCM 8929 / NBRC 15157 / NCIMB 11770)</name>
    <dbReference type="NCBI Taxonomy" id="330779"/>
    <lineage>
        <taxon>Archaea</taxon>
        <taxon>Thermoproteota</taxon>
        <taxon>Thermoprotei</taxon>
        <taxon>Sulfolobales</taxon>
        <taxon>Sulfolobaceae</taxon>
        <taxon>Sulfolobus</taxon>
    </lineage>
</organism>
<reference key="1">
    <citation type="journal article" date="2005" name="J. Bacteriol.">
        <title>The genome of Sulfolobus acidocaldarius, a model organism of the Crenarchaeota.</title>
        <authorList>
            <person name="Chen L."/>
            <person name="Bruegger K."/>
            <person name="Skovgaard M."/>
            <person name="Redder P."/>
            <person name="She Q."/>
            <person name="Torarinsson E."/>
            <person name="Greve B."/>
            <person name="Awayez M."/>
            <person name="Zibat A."/>
            <person name="Klenk H.-P."/>
            <person name="Garrett R.A."/>
        </authorList>
    </citation>
    <scope>NUCLEOTIDE SEQUENCE [LARGE SCALE GENOMIC DNA]</scope>
    <source>
        <strain>ATCC 33909 / DSM 639 / JCM 8929 / NBRC 15157 / NCIMB 11770</strain>
    </source>
</reference>
<reference key="2">
    <citation type="journal article" date="2013" name="Mol. Microbiol.">
        <title>The one-component system ArnR: a membrane-bound activator of the crenarchaeal archaellum.</title>
        <authorList>
            <person name="Lassak K."/>
            <person name="Peeters E."/>
            <person name="Wrobel S."/>
            <person name="Albers S.V."/>
        </authorList>
    </citation>
    <scope>FUNCTION AS A REGULATOR</scope>
    <scope>SUBCELLULAR LOCATION</scope>
    <scope>INDUCTION</scope>
    <scope>DISRUPTION PHENOTYPE</scope>
    <source>
        <strain>ATCC 33909 / DSM 639 / JCM 8929 / NBRC 15157 / NCIMB 11770</strain>
    </source>
</reference>
<reference key="3">
    <citation type="journal article" date="2017" name="Mol. Microbiol.">
        <title>ArnS, a kinase involved in starvation-induced archaellum expression.</title>
        <authorList>
            <person name="Haurat M.F."/>
            <person name="Figueiredo A.S."/>
            <person name="Hoffmann L."/>
            <person name="Li L."/>
            <person name="Herr K."/>
            <person name="Wilson A.J."/>
            <person name="Beeby M."/>
            <person name="Schaber J."/>
            <person name="Albers S.-V."/>
        </authorList>
    </citation>
    <scope>REGULATION BY ARNS</scope>
    <source>
        <strain>ATCC 33909 / DSM 639 / JCM 8929 / NBRC 15157 / NCIMB 11770</strain>
    </source>
</reference>
<comment type="function">
    <text evidence="2">Involved in regulation of archaellar gene expression. Activates flaB transcription upon nutrient starvation by acting on the flaB promoter.</text>
</comment>
<comment type="subcellular location">
    <subcellularLocation>
        <location evidence="2">Cell membrane</location>
        <topology evidence="1">Multi-pass membrane protein</topology>
    </subcellularLocation>
</comment>
<comment type="induction">
    <text evidence="2 3">Induced during starvation conditions (PubMed:23461567). Regulated by ArnS (PubMed:27731916).</text>
</comment>
<comment type="disruption phenotype">
    <text evidence="2">Deletion results in diminished flaB expression and strongly impaired swimming motility.</text>
</comment>
<protein>
    <recommendedName>
        <fullName evidence="5">HTH-type transcriptional activator ArnR</fullName>
    </recommendedName>
    <alternativeName>
        <fullName evidence="5">Archaellum regulatory network protein ArnR</fullName>
    </alternativeName>
</protein>
<feature type="chain" id="PRO_0000439511" description="HTH-type transcriptional activator ArnR">
    <location>
        <begin position="1"/>
        <end position="269"/>
    </location>
</feature>
<feature type="topological domain" description="Cytoplasmic" evidence="6">
    <location>
        <begin position="1"/>
        <end position="218"/>
    </location>
</feature>
<feature type="transmembrane region" description="Helical" evidence="1">
    <location>
        <begin position="219"/>
        <end position="239"/>
    </location>
</feature>
<feature type="topological domain" description="Extracellular" evidence="6">
    <location>
        <begin position="240"/>
        <end position="242"/>
    </location>
</feature>
<feature type="transmembrane region" description="Helical" evidence="1">
    <location>
        <begin position="243"/>
        <end position="263"/>
    </location>
</feature>
<feature type="topological domain" description="Cytoplasmic" evidence="6">
    <location>
        <begin position="264"/>
        <end position="269"/>
    </location>
</feature>
<feature type="DNA-binding region" description="H-T-H motif" evidence="5">
    <location>
        <begin position="39"/>
        <end position="62"/>
    </location>
</feature>
<keyword id="KW-0010">Activator</keyword>
<keyword id="KW-1003">Cell membrane</keyword>
<keyword id="KW-0238">DNA-binding</keyword>
<keyword id="KW-0472">Membrane</keyword>
<keyword id="KW-1185">Reference proteome</keyword>
<keyword id="KW-0346">Stress response</keyword>
<keyword id="KW-0804">Transcription</keyword>
<keyword id="KW-0805">Transcription regulation</keyword>
<keyword id="KW-0812">Transmembrane</keyword>
<keyword id="KW-1133">Transmembrane helix</keyword>
<evidence type="ECO:0000255" key="1"/>
<evidence type="ECO:0000269" key="2">
    <source>
    </source>
</evidence>
<evidence type="ECO:0000269" key="3">
    <source>
    </source>
</evidence>
<evidence type="ECO:0000303" key="4">
    <source>
    </source>
</evidence>
<evidence type="ECO:0000305" key="5"/>
<evidence type="ECO:0000305" key="6">
    <source>
    </source>
</evidence>
<evidence type="ECO:0000312" key="7">
    <source>
        <dbReference type="EMBL" id="AAY80527.1"/>
    </source>
</evidence>
<proteinExistence type="evidence at protein level"/>
<sequence>MTKSLFDVLKELDSLVDFSRAKLQWDILIILATKGPSSTTEISQTINTSRKSIIDAIRKLVDKELVTKVKHDIYGLSDKGKELWNKIDSVLNIEVINGNNHKGQSKDEDILALENLSQYFYLINLSKMITINHDGLSLDKAARELGVSRQTLKYYLELFEEKKLFRVIGKRTHFKKNIYKCVLMNEGKRLLFRLPEFTKMKNNLPLKLLLRLTNSYTLEMANVKVMGFILISLPLLMYFRDQLGLIELPWLYAVIFLALLSVFAQILSR</sequence>
<dbReference type="EMBL" id="CP000077">
    <property type="protein sequence ID" value="AAY80527.1"/>
    <property type="molecule type" value="Genomic_DNA"/>
</dbReference>
<dbReference type="RefSeq" id="WP_011278029.1">
    <property type="nucleotide sequence ID" value="NC_007181.1"/>
</dbReference>
<dbReference type="STRING" id="330779.Saci_1180"/>
<dbReference type="GeneID" id="14551684"/>
<dbReference type="GeneID" id="78441526"/>
<dbReference type="KEGG" id="sai:Saci_1180"/>
<dbReference type="PATRIC" id="fig|330779.12.peg.1144"/>
<dbReference type="eggNOG" id="arCOG05969">
    <property type="taxonomic scope" value="Archaea"/>
</dbReference>
<dbReference type="HOGENOM" id="CLU_1032970_0_0_2"/>
<dbReference type="Proteomes" id="UP000001018">
    <property type="component" value="Chromosome"/>
</dbReference>
<dbReference type="GO" id="GO:0005886">
    <property type="term" value="C:plasma membrane"/>
    <property type="evidence" value="ECO:0007669"/>
    <property type="project" value="UniProtKB-SubCell"/>
</dbReference>
<dbReference type="GO" id="GO:0003677">
    <property type="term" value="F:DNA binding"/>
    <property type="evidence" value="ECO:0007669"/>
    <property type="project" value="UniProtKB-KW"/>
</dbReference>
<dbReference type="GO" id="GO:0003700">
    <property type="term" value="F:DNA-binding transcription factor activity"/>
    <property type="evidence" value="ECO:0007669"/>
    <property type="project" value="InterPro"/>
</dbReference>
<dbReference type="Gene3D" id="1.10.10.10">
    <property type="entry name" value="Winged helix-like DNA-binding domain superfamily/Winged helix DNA-binding domain"/>
    <property type="match status" value="1"/>
</dbReference>
<dbReference type="InterPro" id="IPR053515">
    <property type="entry name" value="HTH-type_ArnR"/>
</dbReference>
<dbReference type="InterPro" id="IPR000835">
    <property type="entry name" value="HTH_MarR-typ"/>
</dbReference>
<dbReference type="InterPro" id="IPR036388">
    <property type="entry name" value="WH-like_DNA-bd_sf"/>
</dbReference>
<dbReference type="InterPro" id="IPR036390">
    <property type="entry name" value="WH_DNA-bd_sf"/>
</dbReference>
<dbReference type="NCBIfam" id="NF041016">
    <property type="entry name" value="trans_reg_ArnR"/>
    <property type="match status" value="1"/>
</dbReference>
<dbReference type="Pfam" id="PF01047">
    <property type="entry name" value="MarR"/>
    <property type="match status" value="1"/>
</dbReference>
<dbReference type="SUPFAM" id="SSF46785">
    <property type="entry name" value="Winged helix' DNA-binding domain"/>
    <property type="match status" value="1"/>
</dbReference>
<name>ARNR_SULAC</name>
<accession>Q4J9J9</accession>